<feature type="chain" id="PRO_1000189918" description="Co-chaperone protein HscB homolog">
    <location>
        <begin position="1"/>
        <end position="171"/>
    </location>
</feature>
<feature type="domain" description="J" evidence="1">
    <location>
        <begin position="2"/>
        <end position="74"/>
    </location>
</feature>
<keyword id="KW-0143">Chaperone</keyword>
<comment type="function">
    <text evidence="1">Co-chaperone involved in the maturation of iron-sulfur cluster-containing proteins. Seems to help targeting proteins to be folded toward HscA.</text>
</comment>
<comment type="subunit">
    <text evidence="1">Interacts with HscA and stimulates its ATPase activity.</text>
</comment>
<comment type="similarity">
    <text evidence="1">Belongs to the HscB family.</text>
</comment>
<sequence length="171" mass="19874">MNHFELFGLPLQFQLDGSLLSSQFRDLQRQFHPDKFAIASERDRLLAVQKAAQINDAYQVLKNPISRAEYLLVQHGEDIRGEQQTMQDPMFLMEQMELREELEDIADSSDPEDALFAFEGKVSKMYKQQLSAIQQELESEAWLEAADRVRKLKFIAKLKNEIELVEDRLIG</sequence>
<accession>B7VJS9</accession>
<protein>
    <recommendedName>
        <fullName evidence="1">Co-chaperone protein HscB homolog</fullName>
    </recommendedName>
</protein>
<name>HSCB_VIBA3</name>
<proteinExistence type="inferred from homology"/>
<reference key="1">
    <citation type="submission" date="2009-02" db="EMBL/GenBank/DDBJ databases">
        <title>Vibrio splendidus str. LGP32 complete genome.</title>
        <authorList>
            <person name="Mazel D."/>
            <person name="Le Roux F."/>
        </authorList>
    </citation>
    <scope>NUCLEOTIDE SEQUENCE [LARGE SCALE GENOMIC DNA]</scope>
    <source>
        <strain>LGP32</strain>
    </source>
</reference>
<gene>
    <name evidence="1" type="primary">hscB</name>
    <name type="ordered locus">VS_0610</name>
</gene>
<evidence type="ECO:0000255" key="1">
    <source>
        <dbReference type="HAMAP-Rule" id="MF_00682"/>
    </source>
</evidence>
<dbReference type="EMBL" id="FM954972">
    <property type="protein sequence ID" value="CAV17603.1"/>
    <property type="molecule type" value="Genomic_DNA"/>
</dbReference>
<dbReference type="SMR" id="B7VJS9"/>
<dbReference type="STRING" id="575788.VS_0610"/>
<dbReference type="KEGG" id="vsp:VS_0610"/>
<dbReference type="eggNOG" id="COG1076">
    <property type="taxonomic scope" value="Bacteria"/>
</dbReference>
<dbReference type="HOGENOM" id="CLU_068529_2_0_6"/>
<dbReference type="Proteomes" id="UP000009100">
    <property type="component" value="Chromosome 1"/>
</dbReference>
<dbReference type="GO" id="GO:1990230">
    <property type="term" value="C:iron-sulfur cluster transfer complex"/>
    <property type="evidence" value="ECO:0007669"/>
    <property type="project" value="TreeGrafter"/>
</dbReference>
<dbReference type="GO" id="GO:0001671">
    <property type="term" value="F:ATPase activator activity"/>
    <property type="evidence" value="ECO:0007669"/>
    <property type="project" value="InterPro"/>
</dbReference>
<dbReference type="GO" id="GO:0051087">
    <property type="term" value="F:protein-folding chaperone binding"/>
    <property type="evidence" value="ECO:0007669"/>
    <property type="project" value="InterPro"/>
</dbReference>
<dbReference type="GO" id="GO:0044571">
    <property type="term" value="P:[2Fe-2S] cluster assembly"/>
    <property type="evidence" value="ECO:0007669"/>
    <property type="project" value="InterPro"/>
</dbReference>
<dbReference type="GO" id="GO:0051259">
    <property type="term" value="P:protein complex oligomerization"/>
    <property type="evidence" value="ECO:0007669"/>
    <property type="project" value="InterPro"/>
</dbReference>
<dbReference type="GO" id="GO:0006457">
    <property type="term" value="P:protein folding"/>
    <property type="evidence" value="ECO:0007669"/>
    <property type="project" value="UniProtKB-UniRule"/>
</dbReference>
<dbReference type="CDD" id="cd06257">
    <property type="entry name" value="DnaJ"/>
    <property type="match status" value="1"/>
</dbReference>
<dbReference type="Gene3D" id="1.10.287.110">
    <property type="entry name" value="DnaJ domain"/>
    <property type="match status" value="1"/>
</dbReference>
<dbReference type="Gene3D" id="1.20.1280.20">
    <property type="entry name" value="HscB, C-terminal domain"/>
    <property type="match status" value="1"/>
</dbReference>
<dbReference type="HAMAP" id="MF_00682">
    <property type="entry name" value="HscB"/>
    <property type="match status" value="1"/>
</dbReference>
<dbReference type="InterPro" id="IPR001623">
    <property type="entry name" value="DnaJ_domain"/>
</dbReference>
<dbReference type="InterPro" id="IPR004640">
    <property type="entry name" value="HscB"/>
</dbReference>
<dbReference type="InterPro" id="IPR036386">
    <property type="entry name" value="HscB_C_sf"/>
</dbReference>
<dbReference type="InterPro" id="IPR009073">
    <property type="entry name" value="HscB_oligo_C"/>
</dbReference>
<dbReference type="InterPro" id="IPR036869">
    <property type="entry name" value="J_dom_sf"/>
</dbReference>
<dbReference type="NCBIfam" id="TIGR00714">
    <property type="entry name" value="hscB"/>
    <property type="match status" value="1"/>
</dbReference>
<dbReference type="NCBIfam" id="NF003449">
    <property type="entry name" value="PRK05014.1"/>
    <property type="match status" value="1"/>
</dbReference>
<dbReference type="PANTHER" id="PTHR14021">
    <property type="entry name" value="IRON-SULFUR CLUSTER CO-CHAPERONE PROTEIN HSCB"/>
    <property type="match status" value="1"/>
</dbReference>
<dbReference type="PANTHER" id="PTHR14021:SF15">
    <property type="entry name" value="IRON-SULFUR CLUSTER CO-CHAPERONE PROTEIN HSCB"/>
    <property type="match status" value="1"/>
</dbReference>
<dbReference type="Pfam" id="PF00226">
    <property type="entry name" value="DnaJ"/>
    <property type="match status" value="1"/>
</dbReference>
<dbReference type="Pfam" id="PF07743">
    <property type="entry name" value="HSCB_C"/>
    <property type="match status" value="1"/>
</dbReference>
<dbReference type="SMART" id="SM00271">
    <property type="entry name" value="DnaJ"/>
    <property type="match status" value="1"/>
</dbReference>
<dbReference type="SUPFAM" id="SSF46565">
    <property type="entry name" value="Chaperone J-domain"/>
    <property type="match status" value="1"/>
</dbReference>
<dbReference type="SUPFAM" id="SSF47144">
    <property type="entry name" value="HSC20 (HSCB), C-terminal oligomerisation domain"/>
    <property type="match status" value="1"/>
</dbReference>
<dbReference type="PROSITE" id="PS50076">
    <property type="entry name" value="DNAJ_2"/>
    <property type="match status" value="1"/>
</dbReference>
<organism>
    <name type="scientific">Vibrio atlanticus (strain LGP32)</name>
    <name type="common">Vibrio splendidus (strain Mel32)</name>
    <dbReference type="NCBI Taxonomy" id="575788"/>
    <lineage>
        <taxon>Bacteria</taxon>
        <taxon>Pseudomonadati</taxon>
        <taxon>Pseudomonadota</taxon>
        <taxon>Gammaproteobacteria</taxon>
        <taxon>Vibrionales</taxon>
        <taxon>Vibrionaceae</taxon>
        <taxon>Vibrio</taxon>
    </lineage>
</organism>